<name>GCH1_STRPS</name>
<organism>
    <name type="scientific">Streptococcus pneumoniae (strain CGSP14)</name>
    <dbReference type="NCBI Taxonomy" id="516950"/>
    <lineage>
        <taxon>Bacteria</taxon>
        <taxon>Bacillati</taxon>
        <taxon>Bacillota</taxon>
        <taxon>Bacilli</taxon>
        <taxon>Lactobacillales</taxon>
        <taxon>Streptococcaceae</taxon>
        <taxon>Streptococcus</taxon>
    </lineage>
</organism>
<gene>
    <name evidence="1" type="primary">folE</name>
    <name type="ordered locus">SPCG_0304</name>
</gene>
<dbReference type="EC" id="3.5.4.16" evidence="1"/>
<dbReference type="EMBL" id="CP001033">
    <property type="protein sequence ID" value="ACB89556.1"/>
    <property type="molecule type" value="Genomic_DNA"/>
</dbReference>
<dbReference type="RefSeq" id="WP_000380924.1">
    <property type="nucleotide sequence ID" value="NC_010582.1"/>
</dbReference>
<dbReference type="SMR" id="B2ISL9"/>
<dbReference type="GeneID" id="45652233"/>
<dbReference type="KEGG" id="spw:SPCG_0304"/>
<dbReference type="HOGENOM" id="CLU_049768_3_3_9"/>
<dbReference type="UniPathway" id="UPA00848">
    <property type="reaction ID" value="UER00151"/>
</dbReference>
<dbReference type="GO" id="GO:0005737">
    <property type="term" value="C:cytoplasm"/>
    <property type="evidence" value="ECO:0007669"/>
    <property type="project" value="TreeGrafter"/>
</dbReference>
<dbReference type="GO" id="GO:0005525">
    <property type="term" value="F:GTP binding"/>
    <property type="evidence" value="ECO:0007669"/>
    <property type="project" value="UniProtKB-KW"/>
</dbReference>
<dbReference type="GO" id="GO:0003934">
    <property type="term" value="F:GTP cyclohydrolase I activity"/>
    <property type="evidence" value="ECO:0007669"/>
    <property type="project" value="UniProtKB-UniRule"/>
</dbReference>
<dbReference type="GO" id="GO:0008270">
    <property type="term" value="F:zinc ion binding"/>
    <property type="evidence" value="ECO:0007669"/>
    <property type="project" value="UniProtKB-UniRule"/>
</dbReference>
<dbReference type="GO" id="GO:0006730">
    <property type="term" value="P:one-carbon metabolic process"/>
    <property type="evidence" value="ECO:0007669"/>
    <property type="project" value="UniProtKB-UniRule"/>
</dbReference>
<dbReference type="GO" id="GO:0006729">
    <property type="term" value="P:tetrahydrobiopterin biosynthetic process"/>
    <property type="evidence" value="ECO:0007669"/>
    <property type="project" value="TreeGrafter"/>
</dbReference>
<dbReference type="GO" id="GO:0046654">
    <property type="term" value="P:tetrahydrofolate biosynthetic process"/>
    <property type="evidence" value="ECO:0007669"/>
    <property type="project" value="UniProtKB-UniRule"/>
</dbReference>
<dbReference type="CDD" id="cd00642">
    <property type="entry name" value="GTP_cyclohydro1"/>
    <property type="match status" value="1"/>
</dbReference>
<dbReference type="FunFam" id="1.10.286.10:FF:000001">
    <property type="entry name" value="GTP cyclohydrolase 1"/>
    <property type="match status" value="1"/>
</dbReference>
<dbReference type="FunFam" id="3.30.1130.10:FF:000001">
    <property type="entry name" value="GTP cyclohydrolase 1"/>
    <property type="match status" value="1"/>
</dbReference>
<dbReference type="Gene3D" id="1.10.286.10">
    <property type="match status" value="1"/>
</dbReference>
<dbReference type="Gene3D" id="3.30.1130.10">
    <property type="match status" value="1"/>
</dbReference>
<dbReference type="HAMAP" id="MF_00223">
    <property type="entry name" value="FolE"/>
    <property type="match status" value="1"/>
</dbReference>
<dbReference type="InterPro" id="IPR043133">
    <property type="entry name" value="GTP-CH-I_C/QueF"/>
</dbReference>
<dbReference type="InterPro" id="IPR043134">
    <property type="entry name" value="GTP-CH-I_N"/>
</dbReference>
<dbReference type="InterPro" id="IPR001474">
    <property type="entry name" value="GTP_CycHdrlase_I"/>
</dbReference>
<dbReference type="InterPro" id="IPR018234">
    <property type="entry name" value="GTP_CycHdrlase_I_CS"/>
</dbReference>
<dbReference type="InterPro" id="IPR020602">
    <property type="entry name" value="GTP_CycHdrlase_I_dom"/>
</dbReference>
<dbReference type="NCBIfam" id="TIGR00063">
    <property type="entry name" value="folE"/>
    <property type="match status" value="1"/>
</dbReference>
<dbReference type="NCBIfam" id="NF006825">
    <property type="entry name" value="PRK09347.1-2"/>
    <property type="match status" value="1"/>
</dbReference>
<dbReference type="NCBIfam" id="NF006826">
    <property type="entry name" value="PRK09347.1-3"/>
    <property type="match status" value="1"/>
</dbReference>
<dbReference type="PANTHER" id="PTHR11109:SF7">
    <property type="entry name" value="GTP CYCLOHYDROLASE 1"/>
    <property type="match status" value="1"/>
</dbReference>
<dbReference type="PANTHER" id="PTHR11109">
    <property type="entry name" value="GTP CYCLOHYDROLASE I"/>
    <property type="match status" value="1"/>
</dbReference>
<dbReference type="Pfam" id="PF01227">
    <property type="entry name" value="GTP_cyclohydroI"/>
    <property type="match status" value="1"/>
</dbReference>
<dbReference type="SUPFAM" id="SSF55620">
    <property type="entry name" value="Tetrahydrobiopterin biosynthesis enzymes-like"/>
    <property type="match status" value="1"/>
</dbReference>
<dbReference type="PROSITE" id="PS00859">
    <property type="entry name" value="GTP_CYCLOHYDROL_1_1"/>
    <property type="match status" value="1"/>
</dbReference>
<dbReference type="PROSITE" id="PS00860">
    <property type="entry name" value="GTP_CYCLOHYDROL_1_2"/>
    <property type="match status" value="1"/>
</dbReference>
<reference key="1">
    <citation type="journal article" date="2009" name="BMC Genomics">
        <title>Genome evolution driven by host adaptations results in a more virulent and antimicrobial-resistant Streptococcus pneumoniae serotype 14.</title>
        <authorList>
            <person name="Ding F."/>
            <person name="Tang P."/>
            <person name="Hsu M.-H."/>
            <person name="Cui P."/>
            <person name="Hu S."/>
            <person name="Yu J."/>
            <person name="Chiu C.-H."/>
        </authorList>
    </citation>
    <scope>NUCLEOTIDE SEQUENCE [LARGE SCALE GENOMIC DNA]</scope>
    <source>
        <strain>CGSP14</strain>
    </source>
</reference>
<sequence>MDTQKIEAAVKMIIEAVGENANREGLQETPARVARMYQEIFSGLGQTAEEHLSKSFEIIDDNMVVEKDIFFHTMCEHHFLPFYGRAHIAYIPDGRVAGLSKLARTVEVYSKKPQIQERLNIEVADALMDYLGAKGAFVVIEAEHMCMSMRGVRKPGTATLTTVARGLFETDKDLRDQAYRLMGL</sequence>
<protein>
    <recommendedName>
        <fullName evidence="1">GTP cyclohydrolase 1</fullName>
        <ecNumber evidence="1">3.5.4.16</ecNumber>
    </recommendedName>
    <alternativeName>
        <fullName evidence="1">GTP cyclohydrolase I</fullName>
        <shortName evidence="1">GTP-CH-I</shortName>
    </alternativeName>
</protein>
<evidence type="ECO:0000255" key="1">
    <source>
        <dbReference type="HAMAP-Rule" id="MF_00223"/>
    </source>
</evidence>
<comment type="catalytic activity">
    <reaction evidence="1">
        <text>GTP + H2O = 7,8-dihydroneopterin 3'-triphosphate + formate + H(+)</text>
        <dbReference type="Rhea" id="RHEA:17473"/>
        <dbReference type="ChEBI" id="CHEBI:15377"/>
        <dbReference type="ChEBI" id="CHEBI:15378"/>
        <dbReference type="ChEBI" id="CHEBI:15740"/>
        <dbReference type="ChEBI" id="CHEBI:37565"/>
        <dbReference type="ChEBI" id="CHEBI:58462"/>
        <dbReference type="EC" id="3.5.4.16"/>
    </reaction>
</comment>
<comment type="pathway">
    <text evidence="1">Cofactor biosynthesis; 7,8-dihydroneopterin triphosphate biosynthesis; 7,8-dihydroneopterin triphosphate from GTP: step 1/1.</text>
</comment>
<comment type="subunit">
    <text evidence="1">Homomer.</text>
</comment>
<comment type="similarity">
    <text evidence="1">Belongs to the GTP cyclohydrolase I family.</text>
</comment>
<proteinExistence type="inferred from homology"/>
<keyword id="KW-0342">GTP-binding</keyword>
<keyword id="KW-0378">Hydrolase</keyword>
<keyword id="KW-0479">Metal-binding</keyword>
<keyword id="KW-0547">Nucleotide-binding</keyword>
<keyword id="KW-0554">One-carbon metabolism</keyword>
<keyword id="KW-0862">Zinc</keyword>
<feature type="chain" id="PRO_1000100202" description="GTP cyclohydrolase 1">
    <location>
        <begin position="1"/>
        <end position="184"/>
    </location>
</feature>
<feature type="binding site" evidence="1">
    <location>
        <position position="75"/>
    </location>
    <ligand>
        <name>Zn(2+)</name>
        <dbReference type="ChEBI" id="CHEBI:29105"/>
    </ligand>
</feature>
<feature type="binding site" evidence="1">
    <location>
        <position position="78"/>
    </location>
    <ligand>
        <name>Zn(2+)</name>
        <dbReference type="ChEBI" id="CHEBI:29105"/>
    </ligand>
</feature>
<feature type="binding site" evidence="1">
    <location>
        <position position="146"/>
    </location>
    <ligand>
        <name>Zn(2+)</name>
        <dbReference type="ChEBI" id="CHEBI:29105"/>
    </ligand>
</feature>
<accession>B2ISL9</accession>